<protein>
    <recommendedName>
        <fullName>Evolutionarily conserved signaling intermediate in Toll pathway, mitochondrial</fullName>
    </recommendedName>
</protein>
<name>ECSIT_DANRE</name>
<sequence>MSASHHLLRLQCVRCVSHFLGTPVRQVILPGRAHLQTPGSQHIYVQLLRPFHRSAVCSTDRQNRTDIEKLVEDETHHKDKTLVTHDDIFDRAAGDSKTKVEFNRVVDVFKSKDIRRRGHVEFIYAALKKMPEFGVECDVTVYNKLLDVFPKEVFVPQNFIQRMFNHYPRQQECGVQVLEQMENYGVMPNIETKVLLVQIFGEKSHPIRKFQRIMYWFPKFKHTNPYPVPHVLPSDPVDLAQFSLTRIAADLDAKITIYQYPSTDITETGEEITRPHIVGIQSPDQRSLLAKHNPCKPVFVEGPYPLWLRQKCVHYYLLRADPIPPEEKVEEEIDPEMICPEQSLFFPQRVELDLKVDMGDDHSFNVDEVEEGAVYAMCMAGQGDQATLSQWISGLQETCPILGQIPTVFRLESGPRELQTSTDDHQRPEQEAETDQIIEDDEEPRHSRGVKQ</sequence>
<proteinExistence type="evidence at transcript level"/>
<feature type="transit peptide" description="Mitochondrion" evidence="2">
    <location>
        <begin position="1"/>
        <end position="58"/>
    </location>
</feature>
<feature type="chain" id="PRO_0000291989" description="Evolutionarily conserved signaling intermediate in Toll pathway, mitochondrial">
    <location>
        <begin position="59"/>
        <end position="452"/>
    </location>
</feature>
<feature type="region of interest" description="Disordered" evidence="3">
    <location>
        <begin position="413"/>
        <end position="452"/>
    </location>
</feature>
<feature type="compositionally biased region" description="Acidic residues" evidence="3">
    <location>
        <begin position="431"/>
        <end position="442"/>
    </location>
</feature>
<gene>
    <name type="primary">ecsit</name>
    <name type="ORF">zgc:152999</name>
</gene>
<reference key="1">
    <citation type="submission" date="2006-09" db="EMBL/GenBank/DDBJ databases">
        <authorList>
            <consortium name="NIH - Zebrafish Gene Collection (ZGC) project"/>
        </authorList>
    </citation>
    <scope>NUCLEOTIDE SEQUENCE [LARGE SCALE MRNA]</scope>
    <source>
        <tissue>Eye</tissue>
    </source>
</reference>
<keyword id="KW-0963">Cytoplasm</keyword>
<keyword id="KW-0391">Immunity</keyword>
<keyword id="KW-0399">Innate immunity</keyword>
<keyword id="KW-0496">Mitochondrion</keyword>
<keyword id="KW-0539">Nucleus</keyword>
<keyword id="KW-1185">Reference proteome</keyword>
<keyword id="KW-0809">Transit peptide</keyword>
<evidence type="ECO:0000250" key="1"/>
<evidence type="ECO:0000255" key="2"/>
<evidence type="ECO:0000256" key="3">
    <source>
        <dbReference type="SAM" id="MobiDB-lite"/>
    </source>
</evidence>
<evidence type="ECO:0000305" key="4"/>
<comment type="function">
    <text>Adapter protein of the Toll-like and IL-1 receptor signaling pathway that is involved in the activation of NF-kappa-B.</text>
</comment>
<comment type="function">
    <text evidence="1">Required for efficient assembly of mitochondrial NADH:ubiquinone oxidoreductase.</text>
</comment>
<comment type="subcellular location">
    <subcellularLocation>
        <location evidence="1">Cytoplasm</location>
    </subcellularLocation>
    <subcellularLocation>
        <location evidence="1">Nucleus</location>
    </subcellularLocation>
    <subcellularLocation>
        <location evidence="1">Mitochondrion</location>
    </subcellularLocation>
</comment>
<comment type="similarity">
    <text evidence="4">Belongs to the ECSIT family.</text>
</comment>
<accession>Q08CK1</accession>
<organism>
    <name type="scientific">Danio rerio</name>
    <name type="common">Zebrafish</name>
    <name type="synonym">Brachydanio rerio</name>
    <dbReference type="NCBI Taxonomy" id="7955"/>
    <lineage>
        <taxon>Eukaryota</taxon>
        <taxon>Metazoa</taxon>
        <taxon>Chordata</taxon>
        <taxon>Craniata</taxon>
        <taxon>Vertebrata</taxon>
        <taxon>Euteleostomi</taxon>
        <taxon>Actinopterygii</taxon>
        <taxon>Neopterygii</taxon>
        <taxon>Teleostei</taxon>
        <taxon>Ostariophysi</taxon>
        <taxon>Cypriniformes</taxon>
        <taxon>Danionidae</taxon>
        <taxon>Danioninae</taxon>
        <taxon>Danio</taxon>
    </lineage>
</organism>
<dbReference type="EMBL" id="BC124208">
    <property type="protein sequence ID" value="AAI24209.1"/>
    <property type="molecule type" value="mRNA"/>
</dbReference>
<dbReference type="FunCoup" id="Q08CK1">
    <property type="interactions" value="2328"/>
</dbReference>
<dbReference type="STRING" id="7955.ENSDARP00000124710"/>
<dbReference type="PaxDb" id="7955-ENSDARP00000124710"/>
<dbReference type="AGR" id="ZFIN:ZDB-GENE-030131-1332"/>
<dbReference type="ZFIN" id="ZDB-GENE-030131-1332">
    <property type="gene designation" value="ecsit"/>
</dbReference>
<dbReference type="eggNOG" id="KOG3941">
    <property type="taxonomic scope" value="Eukaryota"/>
</dbReference>
<dbReference type="InParanoid" id="Q08CK1"/>
<dbReference type="PhylomeDB" id="Q08CK1"/>
<dbReference type="PRO" id="PR:Q08CK1"/>
<dbReference type="Proteomes" id="UP000000437">
    <property type="component" value="Unplaced"/>
</dbReference>
<dbReference type="GO" id="GO:0005737">
    <property type="term" value="C:cytoplasm"/>
    <property type="evidence" value="ECO:0000250"/>
    <property type="project" value="UniProtKB"/>
</dbReference>
<dbReference type="GO" id="GO:0005739">
    <property type="term" value="C:mitochondrion"/>
    <property type="evidence" value="ECO:0000250"/>
    <property type="project" value="UniProtKB"/>
</dbReference>
<dbReference type="GO" id="GO:0005634">
    <property type="term" value="C:nucleus"/>
    <property type="evidence" value="ECO:0000250"/>
    <property type="project" value="UniProtKB"/>
</dbReference>
<dbReference type="GO" id="GO:0007178">
    <property type="term" value="P:cell surface receptor protein serine/threonine kinase signaling pathway"/>
    <property type="evidence" value="ECO:0000318"/>
    <property type="project" value="GO_Central"/>
</dbReference>
<dbReference type="GO" id="GO:0045087">
    <property type="term" value="P:innate immune response"/>
    <property type="evidence" value="ECO:0000318"/>
    <property type="project" value="GO_Central"/>
</dbReference>
<dbReference type="GO" id="GO:0051341">
    <property type="term" value="P:regulation of oxidoreductase activity"/>
    <property type="evidence" value="ECO:0000250"/>
    <property type="project" value="UniProtKB"/>
</dbReference>
<dbReference type="GO" id="GO:0061635">
    <property type="term" value="P:regulation of protein complex stability"/>
    <property type="evidence" value="ECO:0000250"/>
    <property type="project" value="UniProtKB"/>
</dbReference>
<dbReference type="InterPro" id="IPR029342">
    <property type="entry name" value="ECIST_C"/>
</dbReference>
<dbReference type="InterPro" id="IPR010418">
    <property type="entry name" value="ECSIT"/>
</dbReference>
<dbReference type="InterPro" id="IPR046448">
    <property type="entry name" value="ECSIT_N"/>
</dbReference>
<dbReference type="PANTHER" id="PTHR13113">
    <property type="entry name" value="ECSIT EVOLUTIONARILY CONSERVED SIGNALING INTERMEDIATE IN TOLL PATHWAYS"/>
    <property type="match status" value="1"/>
</dbReference>
<dbReference type="PANTHER" id="PTHR13113:SF1">
    <property type="entry name" value="EVOLUTIONARILY CONSERVED SIGNALING INTERMEDIATE IN TOLL PATHWAY, MITOCHONDRIAL"/>
    <property type="match status" value="1"/>
</dbReference>
<dbReference type="Pfam" id="PF14784">
    <property type="entry name" value="ECSIT_C"/>
    <property type="match status" value="1"/>
</dbReference>
<dbReference type="Pfam" id="PF06239">
    <property type="entry name" value="ECSIT_N"/>
    <property type="match status" value="1"/>
</dbReference>
<dbReference type="SMART" id="SM01284">
    <property type="entry name" value="ECSIT_Cterm"/>
    <property type="match status" value="1"/>
</dbReference>